<evidence type="ECO:0000250" key="1">
    <source>
        <dbReference type="UniProtKB" id="O15440"/>
    </source>
</evidence>
<evidence type="ECO:0000250" key="2">
    <source>
        <dbReference type="UniProtKB" id="Q9R1X5"/>
    </source>
</evidence>
<evidence type="ECO:0000255" key="3"/>
<evidence type="ECO:0000255" key="4">
    <source>
        <dbReference type="PROSITE-ProRule" id="PRU00434"/>
    </source>
</evidence>
<evidence type="ECO:0000255" key="5">
    <source>
        <dbReference type="PROSITE-ProRule" id="PRU00441"/>
    </source>
</evidence>
<evidence type="ECO:0000256" key="6">
    <source>
        <dbReference type="SAM" id="MobiDB-lite"/>
    </source>
</evidence>
<evidence type="ECO:0000305" key="7"/>
<evidence type="ECO:0000312" key="8">
    <source>
        <dbReference type="RGD" id="70913"/>
    </source>
</evidence>
<proteinExistence type="evidence at transcript level"/>
<dbReference type="EC" id="7.6.2.-" evidence="1"/>
<dbReference type="EC" id="7.6.2.2" evidence="1"/>
<dbReference type="EMBL" id="AB020209">
    <property type="protein sequence ID" value="BAA88897.1"/>
    <property type="molecule type" value="mRNA"/>
</dbReference>
<dbReference type="EMBL" id="AABR07034695">
    <property type="status" value="NOT_ANNOTATED_CDS"/>
    <property type="molecule type" value="Genomic_DNA"/>
</dbReference>
<dbReference type="EMBL" id="AABR07034696">
    <property type="status" value="NOT_ANNOTATED_CDS"/>
    <property type="molecule type" value="Genomic_DNA"/>
</dbReference>
<dbReference type="RefSeq" id="NP_446376.1">
    <property type="nucleotide sequence ID" value="NM_053924.1"/>
</dbReference>
<dbReference type="SMR" id="Q9QYM0"/>
<dbReference type="FunCoup" id="Q9QYM0">
    <property type="interactions" value="1479"/>
</dbReference>
<dbReference type="STRING" id="10116.ENSRNOP00000073913"/>
<dbReference type="GlyCosmos" id="Q9QYM0">
    <property type="glycosylation" value="8 sites, No reported glycans"/>
</dbReference>
<dbReference type="GlyGen" id="Q9QYM0">
    <property type="glycosylation" value="8 sites"/>
</dbReference>
<dbReference type="PhosphoSitePlus" id="Q9QYM0"/>
<dbReference type="PaxDb" id="10116-ENSRNOP00000002316"/>
<dbReference type="GeneID" id="116721"/>
<dbReference type="KEGG" id="rno:116721"/>
<dbReference type="AGR" id="RGD:70913"/>
<dbReference type="CTD" id="10057"/>
<dbReference type="RGD" id="70913">
    <property type="gene designation" value="Abcc5"/>
</dbReference>
<dbReference type="eggNOG" id="KOG0054">
    <property type="taxonomic scope" value="Eukaryota"/>
</dbReference>
<dbReference type="InParanoid" id="Q9QYM0"/>
<dbReference type="OrthoDB" id="38034at9989"/>
<dbReference type="PhylomeDB" id="Q9QYM0"/>
<dbReference type="Reactome" id="R-RNO-2142850">
    <property type="pathway name" value="Hyaluronan biosynthesis and export"/>
</dbReference>
<dbReference type="Reactome" id="R-RNO-382556">
    <property type="pathway name" value="ABC-family proteins mediated transport"/>
</dbReference>
<dbReference type="Reactome" id="R-RNO-9748787">
    <property type="pathway name" value="Azathioprine ADME"/>
</dbReference>
<dbReference type="Reactome" id="R-RNO-9753281">
    <property type="pathway name" value="Paracetamol ADME"/>
</dbReference>
<dbReference type="PRO" id="PR:Q9QYM0"/>
<dbReference type="Proteomes" id="UP000002494">
    <property type="component" value="Chromosome 11"/>
</dbReference>
<dbReference type="Bgee" id="ENSRNOG00000029178">
    <property type="expression patterns" value="Expressed in stomach and 19 other cell types or tissues"/>
</dbReference>
<dbReference type="GO" id="GO:0016324">
    <property type="term" value="C:apical plasma membrane"/>
    <property type="evidence" value="ECO:0000250"/>
    <property type="project" value="UniProtKB"/>
</dbReference>
<dbReference type="GO" id="GO:0016323">
    <property type="term" value="C:basolateral plasma membrane"/>
    <property type="evidence" value="ECO:0000314"/>
    <property type="project" value="ARUK-UCL"/>
</dbReference>
<dbReference type="GO" id="GO:0010008">
    <property type="term" value="C:endosome membrane"/>
    <property type="evidence" value="ECO:0007669"/>
    <property type="project" value="UniProtKB-SubCell"/>
</dbReference>
<dbReference type="GO" id="GO:0005796">
    <property type="term" value="C:Golgi lumen"/>
    <property type="evidence" value="ECO:0007669"/>
    <property type="project" value="UniProtKB-SubCell"/>
</dbReference>
<dbReference type="GO" id="GO:0016020">
    <property type="term" value="C:membrane"/>
    <property type="evidence" value="ECO:0000266"/>
    <property type="project" value="RGD"/>
</dbReference>
<dbReference type="GO" id="GO:0048471">
    <property type="term" value="C:perinuclear region of cytoplasm"/>
    <property type="evidence" value="ECO:0000314"/>
    <property type="project" value="RGD"/>
</dbReference>
<dbReference type="GO" id="GO:0005886">
    <property type="term" value="C:plasma membrane"/>
    <property type="evidence" value="ECO:0000266"/>
    <property type="project" value="RGD"/>
</dbReference>
<dbReference type="GO" id="GO:0140359">
    <property type="term" value="F:ABC-type transporter activity"/>
    <property type="evidence" value="ECO:0000266"/>
    <property type="project" value="RGD"/>
</dbReference>
<dbReference type="GO" id="GO:0008559">
    <property type="term" value="F:ABC-type xenobiotic transporter activity"/>
    <property type="evidence" value="ECO:0000250"/>
    <property type="project" value="UniProtKB"/>
</dbReference>
<dbReference type="GO" id="GO:0005524">
    <property type="term" value="F:ATP binding"/>
    <property type="evidence" value="ECO:0007669"/>
    <property type="project" value="UniProtKB-KW"/>
</dbReference>
<dbReference type="GO" id="GO:0016887">
    <property type="term" value="F:ATP hydrolysis activity"/>
    <property type="evidence" value="ECO:0007669"/>
    <property type="project" value="InterPro"/>
</dbReference>
<dbReference type="GO" id="GO:0042626">
    <property type="term" value="F:ATPase-coupled transmembrane transporter activity"/>
    <property type="evidence" value="ECO:0000250"/>
    <property type="project" value="UniProtKB"/>
</dbReference>
<dbReference type="GO" id="GO:1901505">
    <property type="term" value="F:carbohydrate derivative transmembrane transporter activity"/>
    <property type="evidence" value="ECO:0000266"/>
    <property type="project" value="RGD"/>
</dbReference>
<dbReference type="GO" id="GO:0015562">
    <property type="term" value="F:efflux transmembrane transporter activity"/>
    <property type="evidence" value="ECO:0000266"/>
    <property type="project" value="RGD"/>
</dbReference>
<dbReference type="GO" id="GO:0034634">
    <property type="term" value="F:glutathione transmembrane transporter activity"/>
    <property type="evidence" value="ECO:0000266"/>
    <property type="project" value="RGD"/>
</dbReference>
<dbReference type="GO" id="GO:0015232">
    <property type="term" value="F:heme transmembrane transporter activity"/>
    <property type="evidence" value="ECO:0000250"/>
    <property type="project" value="UniProtKB"/>
</dbReference>
<dbReference type="GO" id="GO:0022884">
    <property type="term" value="F:macromolecule transmembrane transporter activity"/>
    <property type="evidence" value="ECO:0000266"/>
    <property type="project" value="RGD"/>
</dbReference>
<dbReference type="GO" id="GO:0015216">
    <property type="term" value="F:purine nucleotide transmembrane transporter activity"/>
    <property type="evidence" value="ECO:0000266"/>
    <property type="project" value="RGD"/>
</dbReference>
<dbReference type="GO" id="GO:0042910">
    <property type="term" value="F:xenobiotic transmembrane transporter activity"/>
    <property type="evidence" value="ECO:0000266"/>
    <property type="project" value="RGD"/>
</dbReference>
<dbReference type="GO" id="GO:0070730">
    <property type="term" value="P:cAMP transport"/>
    <property type="evidence" value="ECO:0000266"/>
    <property type="project" value="RGD"/>
</dbReference>
<dbReference type="GO" id="GO:0070731">
    <property type="term" value="P:cGMP transport"/>
    <property type="evidence" value="ECO:0000266"/>
    <property type="project" value="RGD"/>
</dbReference>
<dbReference type="GO" id="GO:0140115">
    <property type="term" value="P:export across plasma membrane"/>
    <property type="evidence" value="ECO:0000266"/>
    <property type="project" value="RGD"/>
</dbReference>
<dbReference type="GO" id="GO:0098838">
    <property type="term" value="P:folate transmembrane transport"/>
    <property type="evidence" value="ECO:0000250"/>
    <property type="project" value="UniProtKB"/>
</dbReference>
<dbReference type="GO" id="GO:0034775">
    <property type="term" value="P:glutathione transmembrane transport"/>
    <property type="evidence" value="ECO:0000266"/>
    <property type="project" value="RGD"/>
</dbReference>
<dbReference type="GO" id="GO:0035351">
    <property type="term" value="P:heme transmembrane transport"/>
    <property type="evidence" value="ECO:0000250"/>
    <property type="project" value="UniProtKB"/>
</dbReference>
<dbReference type="GO" id="GO:0030213">
    <property type="term" value="P:hyaluronan biosynthetic process"/>
    <property type="evidence" value="ECO:0000266"/>
    <property type="project" value="RGD"/>
</dbReference>
<dbReference type="GO" id="GO:0015865">
    <property type="term" value="P:purine nucleotide transport"/>
    <property type="evidence" value="ECO:0000266"/>
    <property type="project" value="RGD"/>
</dbReference>
<dbReference type="GO" id="GO:0032868">
    <property type="term" value="P:response to insulin"/>
    <property type="evidence" value="ECO:0000270"/>
    <property type="project" value="RGD"/>
</dbReference>
<dbReference type="GO" id="GO:0032496">
    <property type="term" value="P:response to lipopolysaccharide"/>
    <property type="evidence" value="ECO:0000270"/>
    <property type="project" value="RGD"/>
</dbReference>
<dbReference type="GO" id="GO:0055085">
    <property type="term" value="P:transmembrane transport"/>
    <property type="evidence" value="ECO:0000318"/>
    <property type="project" value="GO_Central"/>
</dbReference>
<dbReference type="GO" id="GO:0042908">
    <property type="term" value="P:xenobiotic transport"/>
    <property type="evidence" value="ECO:0000266"/>
    <property type="project" value="RGD"/>
</dbReference>
<dbReference type="CDD" id="cd18592">
    <property type="entry name" value="ABC_6TM_MRP5_8_9_D1"/>
    <property type="match status" value="1"/>
</dbReference>
<dbReference type="CDD" id="cd18599">
    <property type="entry name" value="ABC_6TM_MRP5_8_9_D2"/>
    <property type="match status" value="1"/>
</dbReference>
<dbReference type="CDD" id="cd03250">
    <property type="entry name" value="ABCC_MRP_domain1"/>
    <property type="match status" value="1"/>
</dbReference>
<dbReference type="CDD" id="cd03244">
    <property type="entry name" value="ABCC_MRP_domain2"/>
    <property type="match status" value="1"/>
</dbReference>
<dbReference type="FunFam" id="1.20.1560.10:FF:000012">
    <property type="entry name" value="ATP binding cassette subfamily C member 5"/>
    <property type="match status" value="1"/>
</dbReference>
<dbReference type="FunFam" id="3.40.50.300:FF:000074">
    <property type="entry name" value="Multidrug resistance-associated protein 5 isoform 1"/>
    <property type="match status" value="1"/>
</dbReference>
<dbReference type="FunFam" id="1.20.1560.10:FF:000015">
    <property type="entry name" value="multidrug resistance-associated protein 5 isoform X1"/>
    <property type="match status" value="1"/>
</dbReference>
<dbReference type="FunFam" id="3.40.50.300:FF:000605">
    <property type="entry name" value="multidrug resistance-associated protein 5 isoform X1"/>
    <property type="match status" value="1"/>
</dbReference>
<dbReference type="Gene3D" id="1.20.1560.10">
    <property type="entry name" value="ABC transporter type 1, transmembrane domain"/>
    <property type="match status" value="2"/>
</dbReference>
<dbReference type="Gene3D" id="3.40.50.300">
    <property type="entry name" value="P-loop containing nucleotide triphosphate hydrolases"/>
    <property type="match status" value="2"/>
</dbReference>
<dbReference type="InterPro" id="IPR003593">
    <property type="entry name" value="AAA+_ATPase"/>
</dbReference>
<dbReference type="InterPro" id="IPR011527">
    <property type="entry name" value="ABC1_TM_dom"/>
</dbReference>
<dbReference type="InterPro" id="IPR036640">
    <property type="entry name" value="ABC1_TM_sf"/>
</dbReference>
<dbReference type="InterPro" id="IPR003439">
    <property type="entry name" value="ABC_transporter-like_ATP-bd"/>
</dbReference>
<dbReference type="InterPro" id="IPR017871">
    <property type="entry name" value="ABC_transporter-like_CS"/>
</dbReference>
<dbReference type="InterPro" id="IPR050173">
    <property type="entry name" value="ABC_transporter_C-like"/>
</dbReference>
<dbReference type="InterPro" id="IPR027417">
    <property type="entry name" value="P-loop_NTPase"/>
</dbReference>
<dbReference type="PANTHER" id="PTHR24223">
    <property type="entry name" value="ATP-BINDING CASSETTE SUB-FAMILY C"/>
    <property type="match status" value="1"/>
</dbReference>
<dbReference type="PANTHER" id="PTHR24223:SF196">
    <property type="entry name" value="ATP-BINDING CASSETTE SUB-FAMILY C MEMBER 5"/>
    <property type="match status" value="1"/>
</dbReference>
<dbReference type="Pfam" id="PF00664">
    <property type="entry name" value="ABC_membrane"/>
    <property type="match status" value="2"/>
</dbReference>
<dbReference type="Pfam" id="PF00005">
    <property type="entry name" value="ABC_tran"/>
    <property type="match status" value="2"/>
</dbReference>
<dbReference type="SMART" id="SM00382">
    <property type="entry name" value="AAA"/>
    <property type="match status" value="2"/>
</dbReference>
<dbReference type="SUPFAM" id="SSF90123">
    <property type="entry name" value="ABC transporter transmembrane region"/>
    <property type="match status" value="2"/>
</dbReference>
<dbReference type="SUPFAM" id="SSF52540">
    <property type="entry name" value="P-loop containing nucleoside triphosphate hydrolases"/>
    <property type="match status" value="2"/>
</dbReference>
<dbReference type="PROSITE" id="PS50929">
    <property type="entry name" value="ABC_TM1F"/>
    <property type="match status" value="2"/>
</dbReference>
<dbReference type="PROSITE" id="PS00211">
    <property type="entry name" value="ABC_TRANSPORTER_1"/>
    <property type="match status" value="2"/>
</dbReference>
<dbReference type="PROSITE" id="PS50893">
    <property type="entry name" value="ABC_TRANSPORTER_2"/>
    <property type="match status" value="2"/>
</dbReference>
<reference key="1">
    <citation type="submission" date="1998-11" db="EMBL/GenBank/DDBJ databases">
        <authorList>
            <person name="Homma M."/>
            <person name="Suzuki H."/>
            <person name="Sugiyama Y."/>
        </authorList>
    </citation>
    <scope>NUCLEOTIDE SEQUENCE [MRNA]</scope>
    <source>
        <strain>Sprague-Dawley</strain>
        <tissue>Brain</tissue>
    </source>
</reference>
<reference key="2">
    <citation type="journal article" date="2004" name="Nature">
        <title>Genome sequence of the Brown Norway rat yields insights into mammalian evolution.</title>
        <authorList>
            <person name="Gibbs R.A."/>
            <person name="Weinstock G.M."/>
            <person name="Metzker M.L."/>
            <person name="Muzny D.M."/>
            <person name="Sodergren E.J."/>
            <person name="Scherer S."/>
            <person name="Scott G."/>
            <person name="Steffen D."/>
            <person name="Worley K.C."/>
            <person name="Burch P.E."/>
            <person name="Okwuonu G."/>
            <person name="Hines S."/>
            <person name="Lewis L."/>
            <person name="Deramo C."/>
            <person name="Delgado O."/>
            <person name="Dugan-Rocha S."/>
            <person name="Miner G."/>
            <person name="Morgan M."/>
            <person name="Hawes A."/>
            <person name="Gill R."/>
            <person name="Holt R.A."/>
            <person name="Adams M.D."/>
            <person name="Amanatides P.G."/>
            <person name="Baden-Tillson H."/>
            <person name="Barnstead M."/>
            <person name="Chin S."/>
            <person name="Evans C.A."/>
            <person name="Ferriera S."/>
            <person name="Fosler C."/>
            <person name="Glodek A."/>
            <person name="Gu Z."/>
            <person name="Jennings D."/>
            <person name="Kraft C.L."/>
            <person name="Nguyen T."/>
            <person name="Pfannkoch C.M."/>
            <person name="Sitter C."/>
            <person name="Sutton G.G."/>
            <person name="Venter J.C."/>
            <person name="Woodage T."/>
            <person name="Smith D."/>
            <person name="Lee H.-M."/>
            <person name="Gustafson E."/>
            <person name="Cahill P."/>
            <person name="Kana A."/>
            <person name="Doucette-Stamm L."/>
            <person name="Weinstock K."/>
            <person name="Fechtel K."/>
            <person name="Weiss R.B."/>
            <person name="Dunn D.M."/>
            <person name="Green E.D."/>
            <person name="Blakesley R.W."/>
            <person name="Bouffard G.G."/>
            <person name="De Jong P.J."/>
            <person name="Osoegawa K."/>
            <person name="Zhu B."/>
            <person name="Marra M."/>
            <person name="Schein J."/>
            <person name="Bosdet I."/>
            <person name="Fjell C."/>
            <person name="Jones S."/>
            <person name="Krzywinski M."/>
            <person name="Mathewson C."/>
            <person name="Siddiqui A."/>
            <person name="Wye N."/>
            <person name="McPherson J."/>
            <person name="Zhao S."/>
            <person name="Fraser C.M."/>
            <person name="Shetty J."/>
            <person name="Shatsman S."/>
            <person name="Geer K."/>
            <person name="Chen Y."/>
            <person name="Abramzon S."/>
            <person name="Nierman W.C."/>
            <person name="Havlak P.H."/>
            <person name="Chen R."/>
            <person name="Durbin K.J."/>
            <person name="Egan A."/>
            <person name="Ren Y."/>
            <person name="Song X.-Z."/>
            <person name="Li B."/>
            <person name="Liu Y."/>
            <person name="Qin X."/>
            <person name="Cawley S."/>
            <person name="Cooney A.J."/>
            <person name="D'Souza L.M."/>
            <person name="Martin K."/>
            <person name="Wu J.Q."/>
            <person name="Gonzalez-Garay M.L."/>
            <person name="Jackson A.R."/>
            <person name="Kalafus K.J."/>
            <person name="McLeod M.P."/>
            <person name="Milosavljevic A."/>
            <person name="Virk D."/>
            <person name="Volkov A."/>
            <person name="Wheeler D.A."/>
            <person name="Zhang Z."/>
            <person name="Bailey J.A."/>
            <person name="Eichler E.E."/>
            <person name="Tuzun E."/>
            <person name="Birney E."/>
            <person name="Mongin E."/>
            <person name="Ureta-Vidal A."/>
            <person name="Woodwark C."/>
            <person name="Zdobnov E."/>
            <person name="Bork P."/>
            <person name="Suyama M."/>
            <person name="Torrents D."/>
            <person name="Alexandersson M."/>
            <person name="Trask B.J."/>
            <person name="Young J.M."/>
            <person name="Huang H."/>
            <person name="Wang H."/>
            <person name="Xing H."/>
            <person name="Daniels S."/>
            <person name="Gietzen D."/>
            <person name="Schmidt J."/>
            <person name="Stevens K."/>
            <person name="Vitt U."/>
            <person name="Wingrove J."/>
            <person name="Camara F."/>
            <person name="Mar Alba M."/>
            <person name="Abril J.F."/>
            <person name="Guigo R."/>
            <person name="Smit A."/>
            <person name="Dubchak I."/>
            <person name="Rubin E.M."/>
            <person name="Couronne O."/>
            <person name="Poliakov A."/>
            <person name="Huebner N."/>
            <person name="Ganten D."/>
            <person name="Goesele C."/>
            <person name="Hummel O."/>
            <person name="Kreitler T."/>
            <person name="Lee Y.-A."/>
            <person name="Monti J."/>
            <person name="Schulz H."/>
            <person name="Zimdahl H."/>
            <person name="Himmelbauer H."/>
            <person name="Lehrach H."/>
            <person name="Jacob H.J."/>
            <person name="Bromberg S."/>
            <person name="Gullings-Handley J."/>
            <person name="Jensen-Seaman M.I."/>
            <person name="Kwitek A.E."/>
            <person name="Lazar J."/>
            <person name="Pasko D."/>
            <person name="Tonellato P.J."/>
            <person name="Twigger S."/>
            <person name="Ponting C.P."/>
            <person name="Duarte J.M."/>
            <person name="Rice S."/>
            <person name="Goodstadt L."/>
            <person name="Beatson S.A."/>
            <person name="Emes R.D."/>
            <person name="Winter E.E."/>
            <person name="Webber C."/>
            <person name="Brandt P."/>
            <person name="Nyakatura G."/>
            <person name="Adetobi M."/>
            <person name="Chiaromonte F."/>
            <person name="Elnitski L."/>
            <person name="Eswara P."/>
            <person name="Hardison R.C."/>
            <person name="Hou M."/>
            <person name="Kolbe D."/>
            <person name="Makova K."/>
            <person name="Miller W."/>
            <person name="Nekrutenko A."/>
            <person name="Riemer C."/>
            <person name="Schwartz S."/>
            <person name="Taylor J."/>
            <person name="Yang S."/>
            <person name="Zhang Y."/>
            <person name="Lindpaintner K."/>
            <person name="Andrews T.D."/>
            <person name="Caccamo M."/>
            <person name="Clamp M."/>
            <person name="Clarke L."/>
            <person name="Curwen V."/>
            <person name="Durbin R.M."/>
            <person name="Eyras E."/>
            <person name="Searle S.M."/>
            <person name="Cooper G.M."/>
            <person name="Batzoglou S."/>
            <person name="Brudno M."/>
            <person name="Sidow A."/>
            <person name="Stone E.A."/>
            <person name="Payseur B.A."/>
            <person name="Bourque G."/>
            <person name="Lopez-Otin C."/>
            <person name="Puente X.S."/>
            <person name="Chakrabarti K."/>
            <person name="Chatterji S."/>
            <person name="Dewey C."/>
            <person name="Pachter L."/>
            <person name="Bray N."/>
            <person name="Yap V.B."/>
            <person name="Caspi A."/>
            <person name="Tesler G."/>
            <person name="Pevzner P.A."/>
            <person name="Haussler D."/>
            <person name="Roskin K.M."/>
            <person name="Baertsch R."/>
            <person name="Clawson H."/>
            <person name="Furey T.S."/>
            <person name="Hinrichs A.S."/>
            <person name="Karolchik D."/>
            <person name="Kent W.J."/>
            <person name="Rosenbloom K.R."/>
            <person name="Trumbower H."/>
            <person name="Weirauch M."/>
            <person name="Cooper D.N."/>
            <person name="Stenson P.D."/>
            <person name="Ma B."/>
            <person name="Brent M."/>
            <person name="Arumugam M."/>
            <person name="Shteynberg D."/>
            <person name="Copley R.R."/>
            <person name="Taylor M.S."/>
            <person name="Riethman H."/>
            <person name="Mudunuri U."/>
            <person name="Peterson J."/>
            <person name="Guyer M."/>
            <person name="Felsenfeld A."/>
            <person name="Old S."/>
            <person name="Mockrin S."/>
            <person name="Collins F.S."/>
        </authorList>
    </citation>
    <scope>NUCLEOTIDE SEQUENCE [LARGE SCALE GENOMIC DNA]</scope>
    <source>
        <strain>Brown Norway</strain>
    </source>
</reference>
<name>MRP5_RAT</name>
<comment type="function">
    <text evidence="1 2">ATP-dependent transporter of the ATP-binding cassette (ABC) family that actively extrudes physiological compounds, and xenobiotics from cells. Mediates ATP-dependent transport of endogenous metabolites such as cAMP and cGMP, folic acid and N-lactoyl-amino acids (in vitro). Also acts as a general glutamate conjugate and analog transporter that can limit the brain levels of endogenous metabolites, drugs, and toxins. Confers resistance to the antiviral agent PMEA. Able to transport several anticancer drugs including methotrexate, and nucleotide analogs in vitro, however it does with low affinity, thus the exact role of ABCC5 in mediating resistance still needs to be elucidated. Acts as a heme transporter required for the translocation of cytosolic heme to the secretory pathway (By similarity). May play a role in energy metabolism by regulating the glucagon-like peptide 1 (GLP-1) secretion from enteroendocrine cells (By similarity).</text>
</comment>
<comment type="catalytic activity">
    <reaction evidence="1">
        <text>ATP + H2O + xenobioticSide 1 = ADP + phosphate + xenobioticSide 2.</text>
        <dbReference type="EC" id="7.6.2.2"/>
    </reaction>
</comment>
<comment type="catalytic activity">
    <reaction evidence="1">
        <text>3',5'-cyclic GMP(in) + ATP + H2O = 3',5'-cyclic GMP(out) + ADP + phosphate + H(+)</text>
        <dbReference type="Rhea" id="RHEA:66188"/>
        <dbReference type="ChEBI" id="CHEBI:15377"/>
        <dbReference type="ChEBI" id="CHEBI:15378"/>
        <dbReference type="ChEBI" id="CHEBI:30616"/>
        <dbReference type="ChEBI" id="CHEBI:43474"/>
        <dbReference type="ChEBI" id="CHEBI:57746"/>
        <dbReference type="ChEBI" id="CHEBI:456216"/>
    </reaction>
    <physiologicalReaction direction="left-to-right" evidence="1">
        <dbReference type="Rhea" id="RHEA:66189"/>
    </physiologicalReaction>
</comment>
<comment type="catalytic activity">
    <reaction evidence="1">
        <text>3',5'-cyclic AMP(in) + ATP + H2O = 3',5'-cyclic AMP(out) + ADP + phosphate + H(+)</text>
        <dbReference type="Rhea" id="RHEA:66184"/>
        <dbReference type="ChEBI" id="CHEBI:15377"/>
        <dbReference type="ChEBI" id="CHEBI:15378"/>
        <dbReference type="ChEBI" id="CHEBI:30616"/>
        <dbReference type="ChEBI" id="CHEBI:43474"/>
        <dbReference type="ChEBI" id="CHEBI:58165"/>
        <dbReference type="ChEBI" id="CHEBI:456216"/>
    </reaction>
    <physiologicalReaction direction="left-to-right" evidence="1">
        <dbReference type="Rhea" id="RHEA:66185"/>
    </physiologicalReaction>
</comment>
<comment type="catalytic activity">
    <reaction evidence="1">
        <text>N-acetyl-L-aspartyl-L-glutamate(in) + ATP + H2O = N-acetyl-L-aspartyl-L-glutamate(out) + ADP + phosphate + H(+)</text>
        <dbReference type="Rhea" id="RHEA:66728"/>
        <dbReference type="ChEBI" id="CHEBI:15377"/>
        <dbReference type="ChEBI" id="CHEBI:15378"/>
        <dbReference type="ChEBI" id="CHEBI:30616"/>
        <dbReference type="ChEBI" id="CHEBI:43474"/>
        <dbReference type="ChEBI" id="CHEBI:76931"/>
        <dbReference type="ChEBI" id="CHEBI:456216"/>
    </reaction>
    <physiologicalReaction direction="left-to-right" evidence="1">
        <dbReference type="Rhea" id="RHEA:66729"/>
    </physiologicalReaction>
</comment>
<comment type="catalytic activity">
    <reaction evidence="1">
        <text>N-acetyl-L-aspartyl-L-glutamyl-L-glutamate(in) + ATP + H2O = N-acetyl-L-aspartyl-L-glutamyl-L-glutamate(out) + ADP + phosphate + H(+)</text>
        <dbReference type="Rhea" id="RHEA:66732"/>
        <dbReference type="ChEBI" id="CHEBI:15377"/>
        <dbReference type="ChEBI" id="CHEBI:15378"/>
        <dbReference type="ChEBI" id="CHEBI:30616"/>
        <dbReference type="ChEBI" id="CHEBI:43474"/>
        <dbReference type="ChEBI" id="CHEBI:76935"/>
        <dbReference type="ChEBI" id="CHEBI:456216"/>
    </reaction>
    <physiologicalReaction direction="left-to-right" evidence="1">
        <dbReference type="Rhea" id="RHEA:66733"/>
    </physiologicalReaction>
</comment>
<comment type="catalytic activity">
    <reaction evidence="1">
        <text>N-acetyl-L-glutamate(in) + ATP + H2O = N-acetyl-L-glutamate(out) + ADP + phosphate + H(+)</text>
        <dbReference type="Rhea" id="RHEA:66740"/>
        <dbReference type="ChEBI" id="CHEBI:15377"/>
        <dbReference type="ChEBI" id="CHEBI:15378"/>
        <dbReference type="ChEBI" id="CHEBI:30616"/>
        <dbReference type="ChEBI" id="CHEBI:43474"/>
        <dbReference type="ChEBI" id="CHEBI:44337"/>
        <dbReference type="ChEBI" id="CHEBI:456216"/>
    </reaction>
</comment>
<comment type="catalytic activity">
    <reaction evidence="1">
        <text>N-acetyl-L-aspartate(in) + ATP + H2O = N-acetyl-L-aspartate(out) + ADP + phosphate + H(+)</text>
        <dbReference type="Rhea" id="RHEA:66744"/>
        <dbReference type="ChEBI" id="CHEBI:15377"/>
        <dbReference type="ChEBI" id="CHEBI:15378"/>
        <dbReference type="ChEBI" id="CHEBI:16953"/>
        <dbReference type="ChEBI" id="CHEBI:30616"/>
        <dbReference type="ChEBI" id="CHEBI:43474"/>
        <dbReference type="ChEBI" id="CHEBI:456216"/>
    </reaction>
    <physiologicalReaction direction="left-to-right" evidence="1">
        <dbReference type="Rhea" id="RHEA:66745"/>
    </physiologicalReaction>
</comment>
<comment type="catalytic activity">
    <reaction evidence="1">
        <text>(2S)-2-[5-amino-1-(beta-D-ribosyl)imidazole-4-carboxamido]succinate(in) + ATP + H2O = (2S)-2-[5-amino-1-(beta-D-ribosyl)imidazole-4-carboxamido]succinate(out) + ADP + phosphate + H(+)</text>
        <dbReference type="Rhea" id="RHEA:66752"/>
        <dbReference type="ChEBI" id="CHEBI:15377"/>
        <dbReference type="ChEBI" id="CHEBI:15378"/>
        <dbReference type="ChEBI" id="CHEBI:30616"/>
        <dbReference type="ChEBI" id="CHEBI:43474"/>
        <dbReference type="ChEBI" id="CHEBI:167466"/>
        <dbReference type="ChEBI" id="CHEBI:456216"/>
    </reaction>
    <physiologicalReaction direction="left-to-right" evidence="1">
        <dbReference type="Rhea" id="RHEA:66753"/>
    </physiologicalReaction>
</comment>
<comment type="catalytic activity">
    <reaction evidence="1">
        <text>domoate(in) + ATP + H2O = domoate(out) + ADP + phosphate + H(+)</text>
        <dbReference type="Rhea" id="RHEA:66756"/>
        <dbReference type="ChEBI" id="CHEBI:15377"/>
        <dbReference type="ChEBI" id="CHEBI:15378"/>
        <dbReference type="ChEBI" id="CHEBI:30616"/>
        <dbReference type="ChEBI" id="CHEBI:43474"/>
        <dbReference type="ChEBI" id="CHEBI:167470"/>
        <dbReference type="ChEBI" id="CHEBI:456216"/>
    </reaction>
    <physiologicalReaction direction="left-to-right" evidence="1">
        <dbReference type="Rhea" id="RHEA:66757"/>
    </physiologicalReaction>
</comment>
<comment type="catalytic activity">
    <reaction evidence="1">
        <text>beta-citrylglutamate(in) + ATP + H2O = beta-citrylglutamate(out) + ADP + phosphate + H(+)</text>
        <dbReference type="Rhea" id="RHEA:66736"/>
        <dbReference type="ChEBI" id="CHEBI:15377"/>
        <dbReference type="ChEBI" id="CHEBI:15378"/>
        <dbReference type="ChEBI" id="CHEBI:30616"/>
        <dbReference type="ChEBI" id="CHEBI:43474"/>
        <dbReference type="ChEBI" id="CHEBI:76942"/>
        <dbReference type="ChEBI" id="CHEBI:456216"/>
    </reaction>
    <physiologicalReaction direction="left-to-right" evidence="1">
        <dbReference type="Rhea" id="RHEA:66737"/>
    </physiologicalReaction>
</comment>
<comment type="catalytic activity">
    <reaction evidence="1">
        <text>kainate(in) + ATP + H2O = kainate(out) + ADP + phosphate + H(+)</text>
        <dbReference type="Rhea" id="RHEA:66760"/>
        <dbReference type="ChEBI" id="CHEBI:15377"/>
        <dbReference type="ChEBI" id="CHEBI:15378"/>
        <dbReference type="ChEBI" id="CHEBI:30616"/>
        <dbReference type="ChEBI" id="CHEBI:43474"/>
        <dbReference type="ChEBI" id="CHEBI:156548"/>
        <dbReference type="ChEBI" id="CHEBI:456216"/>
    </reaction>
</comment>
<comment type="catalytic activity">
    <reaction evidence="1">
        <text>N-[(S)-lactoyl]-L-phenylalanine(in) + ATP + H2O = N-[(S)-lactoyl]-L-phenylalanine(out) + ADP + phosphate + H(+)</text>
        <dbReference type="Rhea" id="RHEA:66720"/>
        <dbReference type="ChEBI" id="CHEBI:15377"/>
        <dbReference type="ChEBI" id="CHEBI:15378"/>
        <dbReference type="ChEBI" id="CHEBI:30616"/>
        <dbReference type="ChEBI" id="CHEBI:43474"/>
        <dbReference type="ChEBI" id="CHEBI:167456"/>
        <dbReference type="ChEBI" id="CHEBI:456216"/>
    </reaction>
    <physiologicalReaction direction="left-to-right" evidence="1">
        <dbReference type="Rhea" id="RHEA:66721"/>
    </physiologicalReaction>
</comment>
<comment type="catalytic activity">
    <reaction evidence="1">
        <text>folate(in) + ATP + H2O = folate(out) + ADP + phosphate + H(+)</text>
        <dbReference type="Rhea" id="RHEA:66764"/>
        <dbReference type="ChEBI" id="CHEBI:15377"/>
        <dbReference type="ChEBI" id="CHEBI:15378"/>
        <dbReference type="ChEBI" id="CHEBI:30616"/>
        <dbReference type="ChEBI" id="CHEBI:43474"/>
        <dbReference type="ChEBI" id="CHEBI:62501"/>
        <dbReference type="ChEBI" id="CHEBI:456216"/>
    </reaction>
    <physiologicalReaction direction="left-to-right" evidence="1">
        <dbReference type="Rhea" id="RHEA:66765"/>
    </physiologicalReaction>
</comment>
<comment type="subcellular location">
    <subcellularLocation>
        <location evidence="1">Basolateral cell membrane</location>
        <topology evidence="3">Multi-pass membrane protein</topology>
    </subcellularLocation>
    <subcellularLocation>
        <location evidence="1">Golgi apparatus lumen</location>
    </subcellularLocation>
    <subcellularLocation>
        <location evidence="1">Endosome membrane</location>
    </subcellularLocation>
    <subcellularLocation>
        <location evidence="2">Cytoplasmic granule</location>
    </subcellularLocation>
    <subcellularLocation>
        <location evidence="1">Apical cell membrane</location>
        <topology evidence="3">Multi-pass membrane protein</topology>
    </subcellularLocation>
    <text evidence="1">In most cells, routes to the basolateral plasma membrane, but in the brain capillary endothelial cells that form the blood-brain barrier, resides in the apical membrane.</text>
</comment>
<comment type="miscellaneous">
    <text evidence="1 2">Although other labs have confirmed the ability of ABCC5 to transport cGMP in an ATP-dependent manner, they obtained a much lower affinity for this substrate. The authors conclude that ABCC5 is a low-affinity cyclic nucleotide transporter and a major function in cGMP excretion is unlikely.</text>
</comment>
<comment type="similarity">
    <text evidence="7">Belongs to the ABC transporter superfamily. ABCC family. Conjugate transporter (TC 3.A.1.208) subfamily.</text>
</comment>
<feature type="chain" id="PRO_0000093365" description="ATP-binding cassette sub-family C member 5">
    <location>
        <begin position="1"/>
        <end position="1436"/>
    </location>
</feature>
<feature type="transmembrane region" description="Helical" evidence="5">
    <location>
        <begin position="179"/>
        <end position="199"/>
    </location>
</feature>
<feature type="transmembrane region" description="Helical" evidence="5">
    <location>
        <begin position="219"/>
        <end position="239"/>
    </location>
</feature>
<feature type="transmembrane region" description="Helical" evidence="5">
    <location>
        <begin position="296"/>
        <end position="316"/>
    </location>
</feature>
<feature type="transmembrane region" description="Helical" evidence="5">
    <location>
        <begin position="317"/>
        <end position="337"/>
    </location>
</feature>
<feature type="transmembrane region" description="Helical" evidence="5">
    <location>
        <begin position="400"/>
        <end position="420"/>
    </location>
</feature>
<feature type="transmembrane region" description="Helical" evidence="5">
    <location>
        <begin position="426"/>
        <end position="446"/>
    </location>
</feature>
<feature type="transmembrane region" description="Helical" evidence="5">
    <location>
        <begin position="608"/>
        <end position="628"/>
    </location>
</feature>
<feature type="transmembrane region" description="Helical" evidence="5">
    <location>
        <begin position="847"/>
        <end position="867"/>
    </location>
</feature>
<feature type="transmembrane region" description="Helical" evidence="5">
    <location>
        <begin position="916"/>
        <end position="936"/>
    </location>
</feature>
<feature type="transmembrane region" description="Helical" evidence="5">
    <location>
        <begin position="996"/>
        <end position="1016"/>
    </location>
</feature>
<feature type="transmembrane region" description="Helical" evidence="5">
    <location>
        <begin position="1017"/>
        <end position="1037"/>
    </location>
</feature>
<feature type="transmembrane region" description="Helical" evidence="5">
    <location>
        <begin position="1101"/>
        <end position="1121"/>
    </location>
</feature>
<feature type="transmembrane region" description="Helical" evidence="5">
    <location>
        <begin position="1126"/>
        <end position="1146"/>
    </location>
</feature>
<feature type="domain" description="ABC transmembrane type-1 1" evidence="5">
    <location>
        <begin position="179"/>
        <end position="459"/>
    </location>
</feature>
<feature type="domain" description="ABC transporter 1" evidence="4">
    <location>
        <begin position="562"/>
        <end position="783"/>
    </location>
</feature>
<feature type="domain" description="ABC transmembrane type-1 2" evidence="5">
    <location>
        <begin position="858"/>
        <end position="1154"/>
    </location>
</feature>
<feature type="domain" description="ABC transporter 2" evidence="4">
    <location>
        <begin position="1192"/>
        <end position="1426"/>
    </location>
</feature>
<feature type="region of interest" description="Disordered" evidence="6">
    <location>
        <begin position="12"/>
        <end position="40"/>
    </location>
</feature>
<feature type="region of interest" description="Disordered" evidence="6">
    <location>
        <begin position="499"/>
        <end position="569"/>
    </location>
</feature>
<feature type="region of interest" description="Disordered" evidence="6">
    <location>
        <begin position="795"/>
        <end position="822"/>
    </location>
</feature>
<feature type="compositionally biased region" description="Basic and acidic residues" evidence="6">
    <location>
        <begin position="19"/>
        <end position="36"/>
    </location>
</feature>
<feature type="compositionally biased region" description="Polar residues" evidence="6">
    <location>
        <begin position="499"/>
        <end position="511"/>
    </location>
</feature>
<feature type="compositionally biased region" description="Basic residues" evidence="6">
    <location>
        <begin position="514"/>
        <end position="529"/>
    </location>
</feature>
<feature type="compositionally biased region" description="Basic and acidic residues" evidence="6">
    <location>
        <begin position="545"/>
        <end position="559"/>
    </location>
</feature>
<feature type="binding site" evidence="4">
    <location>
        <begin position="595"/>
        <end position="602"/>
    </location>
    <ligand>
        <name>ATP</name>
        <dbReference type="ChEBI" id="CHEBI:30616"/>
        <label>1</label>
    </ligand>
</feature>
<feature type="binding site" evidence="4">
    <location>
        <begin position="1226"/>
        <end position="1233"/>
    </location>
    <ligand>
        <name>ATP</name>
        <dbReference type="ChEBI" id="CHEBI:30616"/>
        <label>2</label>
    </ligand>
</feature>
<feature type="modified residue" description="Phosphoserine" evidence="1">
    <location>
        <position position="14"/>
    </location>
</feature>
<feature type="modified residue" description="Phosphoserine" evidence="1">
    <location>
        <position position="19"/>
    </location>
</feature>
<feature type="modified residue" description="Phosphoserine" evidence="2">
    <location>
        <position position="43"/>
    </location>
</feature>
<feature type="modified residue" description="Phosphoserine" evidence="1">
    <location>
        <position position="60"/>
    </location>
</feature>
<feature type="modified residue" description="Phosphoserine" evidence="1">
    <location>
        <position position="505"/>
    </location>
</feature>
<feature type="modified residue" description="Phosphoserine" evidence="1">
    <location>
        <position position="509"/>
    </location>
</feature>
<feature type="modified residue" description="Phosphothreonine" evidence="1">
    <location>
        <position position="513"/>
    </location>
</feature>
<feature type="glycosylation site" description="N-linked (GlcNAc...) asparagine" evidence="3">
    <location>
        <position position="494"/>
    </location>
</feature>
<feature type="glycosylation site" description="N-linked (GlcNAc...) asparagine" evidence="3">
    <location>
        <position position="636"/>
    </location>
</feature>
<feature type="glycosylation site" description="N-linked (GlcNAc...) asparagine" evidence="3">
    <location>
        <position position="684"/>
    </location>
</feature>
<feature type="glycosylation site" description="N-linked (GlcNAc...) asparagine" evidence="3">
    <location>
        <position position="889"/>
    </location>
</feature>
<feature type="glycosylation site" description="N-linked (GlcNAc...) asparagine" evidence="3">
    <location>
        <position position="896"/>
    </location>
</feature>
<feature type="glycosylation site" description="N-linked (GlcNAc...) asparagine" evidence="3">
    <location>
        <position position="1043"/>
    </location>
</feature>
<feature type="glycosylation site" description="N-linked (GlcNAc...) asparagine" evidence="3">
    <location>
        <position position="1328"/>
    </location>
</feature>
<feature type="glycosylation site" description="N-linked (GlcNAc...) asparagine" evidence="3">
    <location>
        <position position="1416"/>
    </location>
</feature>
<feature type="sequence conflict" description="In Ref. 1; BAA88897." ref="1">
    <original>T</original>
    <variation>Q</variation>
    <location>
        <position position="29"/>
    </location>
</feature>
<feature type="sequence conflict" description="In Ref. 1; BAA88897." ref="1">
    <original>DPSSGEQI</original>
    <variation>EPRFRRTR</variation>
    <location>
        <begin position="35"/>
        <end position="42"/>
    </location>
</feature>
<feature type="sequence conflict" description="In Ref. 1; BAA88897." ref="1">
    <original>A</original>
    <variation>T</variation>
    <location>
        <position position="1270"/>
    </location>
</feature>
<accession>Q9QYM0</accession>
<accession>A0A0G2K6R4</accession>
<gene>
    <name evidence="8" type="primary">Abcc5</name>
    <name type="synonym">Mrp5</name>
</gene>
<sequence>MKDIDMGKEYIIPSPGYRSVRDRSTIPGTHGDREDPSSGEQISLECQDALETAARVEGLSLDISVHSHLQILDEEHTKGKYHHGLSALKPFRTTTKHQHPVDNAGLFSYMTFSWLSPLAQVVHKKGELLMEDVWPLSKYESSDVNCRRLERLWQEELNEVGPDAASLRRVVWIFCRTRLILSIVCLMITQLAGFSGPAFVVKHLLEYTQATESNLQYSLLLVLGLLLTEVVRSWSLALTWALNYRTGVRLRGAVLTMAFKKILKLKNIKEKSLGELINICSNDGQRMFEAAAVGSLLAGGPVVAILGMIYNVIILGPTGFLGSAVFILFYPAMMFVSRLTAYFRRKCVAATDDRVQKMNEVLTYIKFIKMYAWVKAFSQCVQKIREEERRILEKAGYFQSITVGVAPIVVVIASVVTFSVHMTLGFDLTAAQAFTVVTVFNSMTFALKVTPFSVKSLSEASVAVDRFKSLFLMEEVHMIKNKPASPHIKIEMKNATLAWDSSHSSTQSSPKLTPKVKKDKRAPKGKKEKSRQLQHTEHQAVLAEQKGHLLLDSDERPSPEEEEGKQIHAGSMRLQRTLYNIDLEIEEGKLVGICGSVGSGKTSLISAILGQMTLLEGSIAVSGTFAYVAQQAWILNATLRDNILFGKEFDEERYNSVLNSCCLRPDLAILPNSDLTEIGERGANLSGGQRQRISLARALYSDRSIYILDDPLSALDAHVGNHIFNSAIRKRLKSKTVLFVTHQLQYLVDCDEVIFMKEGCITERGTHEELMNLNGDYATIFNNLLLGETPPVEINSKKEASGSQKSQDKGPKPGSVKKEKAVKSEEGQLVQVEEKGQGSVPWSVYWVYIQAAGGPLAFLVIMVLFMLNVGSTAFSTWWLSYWIKQGSGNSTVFEGNRSSVSDSMRDNPFLQYYASIYALSMAVMLILKAIRGVVFVKGTLRASSRLHDELFRRILRSPMKFFDTTPTGRILNRFSKDMDEVDVRLPFQAEMFIQNVILVFFCVGMIAGVFPWFLVAVGPLLILFSVLHIVSRVLIRELKRLDNITQSPFLSHITSSIQGLATIHAYNKRQEFLHRYQELLDDNQAPFFLFTCAMRWLAVRLDLISIALITTTGLMIVLMHGQIPSAYAGLAISYAVQLTGLFQFTVRLASETEARFTSVERINHYIKTLSLEAPARIKNKAPPHDWPQEGEITFENAEMRYRENLPLVLKKVSFTIKPKEKIGIVGRTGSGKSSLGMALFRLVELSGGCIKIDGVRISDIGLADLRSKLAIIPQEPVLFSGTVRSNLDPFNQYTEEQIWDALERTHMKECIAQLPLKLESEVMENGDNFSVGERQLLCIARALLRHCKILILDEATAAMDTETDLLIQETIREAFADCTMLTIAHRLHTVLGSDRIMVLAQGQVVEFDTPSVLLSNDSSRFYAMCAAAENKVAVKG</sequence>
<keyword id="KW-0067">ATP-binding</keyword>
<keyword id="KW-1003">Cell membrane</keyword>
<keyword id="KW-0967">Endosome</keyword>
<keyword id="KW-0325">Glycoprotein</keyword>
<keyword id="KW-0333">Golgi apparatus</keyword>
<keyword id="KW-0472">Membrane</keyword>
<keyword id="KW-0547">Nucleotide-binding</keyword>
<keyword id="KW-0597">Phosphoprotein</keyword>
<keyword id="KW-1185">Reference proteome</keyword>
<keyword id="KW-0677">Repeat</keyword>
<keyword id="KW-1278">Translocase</keyword>
<keyword id="KW-0812">Transmembrane</keyword>
<keyword id="KW-1133">Transmembrane helix</keyword>
<keyword id="KW-0813">Transport</keyword>
<organism>
    <name type="scientific">Rattus norvegicus</name>
    <name type="common">Rat</name>
    <dbReference type="NCBI Taxonomy" id="10116"/>
    <lineage>
        <taxon>Eukaryota</taxon>
        <taxon>Metazoa</taxon>
        <taxon>Chordata</taxon>
        <taxon>Craniata</taxon>
        <taxon>Vertebrata</taxon>
        <taxon>Euteleostomi</taxon>
        <taxon>Mammalia</taxon>
        <taxon>Eutheria</taxon>
        <taxon>Euarchontoglires</taxon>
        <taxon>Glires</taxon>
        <taxon>Rodentia</taxon>
        <taxon>Myomorpha</taxon>
        <taxon>Muroidea</taxon>
        <taxon>Muridae</taxon>
        <taxon>Murinae</taxon>
        <taxon>Rattus</taxon>
    </lineage>
</organism>
<protein>
    <recommendedName>
        <fullName>ATP-binding cassette sub-family C member 5</fullName>
        <ecNumber evidence="1">7.6.2.-</ecNumber>
        <ecNumber evidence="1">7.6.2.2</ecNumber>
    </recommendedName>
    <alternativeName>
        <fullName>Multidrug resistance-associated protein 5</fullName>
    </alternativeName>
</protein>